<dbReference type="EC" id="2.1.1.77" evidence="1"/>
<dbReference type="EMBL" id="CP000477">
    <property type="protein sequence ID" value="ABK15465.1"/>
    <property type="molecule type" value="Genomic_DNA"/>
</dbReference>
<dbReference type="RefSeq" id="WP_011696843.1">
    <property type="nucleotide sequence ID" value="NC_008553.1"/>
</dbReference>
<dbReference type="SMR" id="A0B9U1"/>
<dbReference type="STRING" id="349307.Mthe_1699"/>
<dbReference type="GeneID" id="4463451"/>
<dbReference type="KEGG" id="mtp:Mthe_1699"/>
<dbReference type="HOGENOM" id="CLU_055432_2_0_2"/>
<dbReference type="OrthoDB" id="33618at2157"/>
<dbReference type="Proteomes" id="UP000000674">
    <property type="component" value="Chromosome"/>
</dbReference>
<dbReference type="GO" id="GO:0005737">
    <property type="term" value="C:cytoplasm"/>
    <property type="evidence" value="ECO:0007669"/>
    <property type="project" value="UniProtKB-SubCell"/>
</dbReference>
<dbReference type="GO" id="GO:0004719">
    <property type="term" value="F:protein-L-isoaspartate (D-aspartate) O-methyltransferase activity"/>
    <property type="evidence" value="ECO:0007669"/>
    <property type="project" value="UniProtKB-UniRule"/>
</dbReference>
<dbReference type="GO" id="GO:0032259">
    <property type="term" value="P:methylation"/>
    <property type="evidence" value="ECO:0007669"/>
    <property type="project" value="UniProtKB-KW"/>
</dbReference>
<dbReference type="GO" id="GO:0036211">
    <property type="term" value="P:protein modification process"/>
    <property type="evidence" value="ECO:0007669"/>
    <property type="project" value="UniProtKB-UniRule"/>
</dbReference>
<dbReference type="GO" id="GO:0030091">
    <property type="term" value="P:protein repair"/>
    <property type="evidence" value="ECO:0007669"/>
    <property type="project" value="UniProtKB-UniRule"/>
</dbReference>
<dbReference type="CDD" id="cd02440">
    <property type="entry name" value="AdoMet_MTases"/>
    <property type="match status" value="1"/>
</dbReference>
<dbReference type="FunFam" id="3.40.50.150:FF:000010">
    <property type="entry name" value="Protein-L-isoaspartate O-methyltransferase"/>
    <property type="match status" value="1"/>
</dbReference>
<dbReference type="Gene3D" id="3.40.50.150">
    <property type="entry name" value="Vaccinia Virus protein VP39"/>
    <property type="match status" value="1"/>
</dbReference>
<dbReference type="HAMAP" id="MF_00090">
    <property type="entry name" value="PIMT"/>
    <property type="match status" value="1"/>
</dbReference>
<dbReference type="InterPro" id="IPR000682">
    <property type="entry name" value="PCMT"/>
</dbReference>
<dbReference type="InterPro" id="IPR029063">
    <property type="entry name" value="SAM-dependent_MTases_sf"/>
</dbReference>
<dbReference type="NCBIfam" id="TIGR00080">
    <property type="entry name" value="pimt"/>
    <property type="match status" value="1"/>
</dbReference>
<dbReference type="NCBIfam" id="NF001453">
    <property type="entry name" value="PRK00312.1"/>
    <property type="match status" value="1"/>
</dbReference>
<dbReference type="NCBIfam" id="NF010549">
    <property type="entry name" value="PRK13942.1"/>
    <property type="match status" value="1"/>
</dbReference>
<dbReference type="PANTHER" id="PTHR11579">
    <property type="entry name" value="PROTEIN-L-ISOASPARTATE O-METHYLTRANSFERASE"/>
    <property type="match status" value="1"/>
</dbReference>
<dbReference type="PANTHER" id="PTHR11579:SF0">
    <property type="entry name" value="PROTEIN-L-ISOASPARTATE(D-ASPARTATE) O-METHYLTRANSFERASE"/>
    <property type="match status" value="1"/>
</dbReference>
<dbReference type="Pfam" id="PF01135">
    <property type="entry name" value="PCMT"/>
    <property type="match status" value="1"/>
</dbReference>
<dbReference type="SUPFAM" id="SSF53335">
    <property type="entry name" value="S-adenosyl-L-methionine-dependent methyltransferases"/>
    <property type="match status" value="1"/>
</dbReference>
<dbReference type="PROSITE" id="PS01279">
    <property type="entry name" value="PCMT"/>
    <property type="match status" value="1"/>
</dbReference>
<accession>A0B9U1</accession>
<keyword id="KW-0963">Cytoplasm</keyword>
<keyword id="KW-0489">Methyltransferase</keyword>
<keyword id="KW-1185">Reference proteome</keyword>
<keyword id="KW-0949">S-adenosyl-L-methionine</keyword>
<keyword id="KW-0808">Transferase</keyword>
<protein>
    <recommendedName>
        <fullName evidence="1">Protein-L-isoaspartate O-methyltransferase</fullName>
        <ecNumber evidence="1">2.1.1.77</ecNumber>
    </recommendedName>
    <alternativeName>
        <fullName evidence="1">L-isoaspartyl protein carboxyl methyltransferase</fullName>
    </alternativeName>
    <alternativeName>
        <fullName evidence="1">Protein L-isoaspartyl methyltransferase</fullName>
    </alternativeName>
    <alternativeName>
        <fullName evidence="1">Protein-beta-aspartate methyltransferase</fullName>
        <shortName evidence="1">PIMT</shortName>
    </alternativeName>
</protein>
<name>PIMT_METTP</name>
<reference key="1">
    <citation type="submission" date="2006-10" db="EMBL/GenBank/DDBJ databases">
        <title>Complete sequence of Methanosaeta thermophila PT.</title>
        <authorList>
            <consortium name="US DOE Joint Genome Institute"/>
            <person name="Copeland A."/>
            <person name="Lucas S."/>
            <person name="Lapidus A."/>
            <person name="Barry K."/>
            <person name="Detter J.C."/>
            <person name="Glavina del Rio T."/>
            <person name="Hammon N."/>
            <person name="Israni S."/>
            <person name="Pitluck S."/>
            <person name="Chain P."/>
            <person name="Malfatti S."/>
            <person name="Shin M."/>
            <person name="Vergez L."/>
            <person name="Schmutz J."/>
            <person name="Larimer F."/>
            <person name="Land M."/>
            <person name="Hauser L."/>
            <person name="Kyrpides N."/>
            <person name="Kim E."/>
            <person name="Smith K.S."/>
            <person name="Ingram-Smith C."/>
            <person name="Richardson P."/>
        </authorList>
    </citation>
    <scope>NUCLEOTIDE SEQUENCE [LARGE SCALE GENOMIC DNA]</scope>
    <source>
        <strain>DSM 6194 / JCM 14653 / NBRC 101360 / PT</strain>
    </source>
</reference>
<organism>
    <name type="scientific">Methanothrix thermoacetophila (strain DSM 6194 / JCM 14653 / NBRC 101360 / PT)</name>
    <name type="common">Methanosaeta thermophila</name>
    <dbReference type="NCBI Taxonomy" id="349307"/>
    <lineage>
        <taxon>Archaea</taxon>
        <taxon>Methanobacteriati</taxon>
        <taxon>Methanobacteriota</taxon>
        <taxon>Stenosarchaea group</taxon>
        <taxon>Methanomicrobia</taxon>
        <taxon>Methanotrichales</taxon>
        <taxon>Methanotrichaceae</taxon>
        <taxon>Methanothrix</taxon>
    </lineage>
</organism>
<feature type="chain" id="PRO_0000351971" description="Protein-L-isoaspartate O-methyltransferase">
    <location>
        <begin position="1"/>
        <end position="210"/>
    </location>
</feature>
<feature type="active site" evidence="1">
    <location>
        <position position="54"/>
    </location>
</feature>
<evidence type="ECO:0000255" key="1">
    <source>
        <dbReference type="HAMAP-Rule" id="MF_00090"/>
    </source>
</evidence>
<sequence length="210" mass="23568">MRKERLIESLRNYVSERVVEAMSRVPRELFVPEELRPMAYEDRPLPIGHGQTISAPHMVAMMCDLLDLREGMKVLEVGGGCGYHAAVMAELVGPSGHVYSVERIPELVEMARRNLERARYRNVSMILGDGTLGYSEQAPYDRISVAASAPDIPEPLKEQLRPGGRMVIPVGSYSQDLLVVTKNHDIRVERAMGVIFVPLIGKYGFKDSFW</sequence>
<gene>
    <name evidence="1" type="primary">pcm</name>
    <name type="ordered locus">Mthe_1699</name>
</gene>
<comment type="function">
    <text evidence="1">Catalyzes the methyl esterification of L-isoaspartyl residues in peptides and proteins that result from spontaneous decomposition of normal L-aspartyl and L-asparaginyl residues. It plays a role in the repair and/or degradation of damaged proteins.</text>
</comment>
<comment type="catalytic activity">
    <reaction evidence="1">
        <text>[protein]-L-isoaspartate + S-adenosyl-L-methionine = [protein]-L-isoaspartate alpha-methyl ester + S-adenosyl-L-homocysteine</text>
        <dbReference type="Rhea" id="RHEA:12705"/>
        <dbReference type="Rhea" id="RHEA-COMP:12143"/>
        <dbReference type="Rhea" id="RHEA-COMP:12144"/>
        <dbReference type="ChEBI" id="CHEBI:57856"/>
        <dbReference type="ChEBI" id="CHEBI:59789"/>
        <dbReference type="ChEBI" id="CHEBI:90596"/>
        <dbReference type="ChEBI" id="CHEBI:90598"/>
        <dbReference type="EC" id="2.1.1.77"/>
    </reaction>
</comment>
<comment type="subcellular location">
    <subcellularLocation>
        <location evidence="1">Cytoplasm</location>
    </subcellularLocation>
</comment>
<comment type="similarity">
    <text evidence="1">Belongs to the methyltransferase superfamily. L-isoaspartyl/D-aspartyl protein methyltransferase family.</text>
</comment>
<proteinExistence type="inferred from homology"/>